<comment type="function">
    <text evidence="1">Required for correct meiotic chromosome segregation and recombination.</text>
</comment>
<comment type="subcellular location">
    <subcellularLocation>
        <location evidence="2">Nucleus</location>
    </subcellularLocation>
</comment>
<organism>
    <name type="scientific">Schizosaccharomyces pombe (strain 972 / ATCC 24843)</name>
    <name type="common">Fission yeast</name>
    <dbReference type="NCBI Taxonomy" id="284812"/>
    <lineage>
        <taxon>Eukaryota</taxon>
        <taxon>Fungi</taxon>
        <taxon>Dikarya</taxon>
        <taxon>Ascomycota</taxon>
        <taxon>Taphrinomycotina</taxon>
        <taxon>Schizosaccharomycetes</taxon>
        <taxon>Schizosaccharomycetales</taxon>
        <taxon>Schizosaccharomycetaceae</taxon>
        <taxon>Schizosaccharomyces</taxon>
    </lineage>
</organism>
<evidence type="ECO:0000269" key="1">
    <source>
    </source>
</evidence>
<evidence type="ECO:0000269" key="2">
    <source>
    </source>
</evidence>
<name>THT2_SCHPO</name>
<reference key="1">
    <citation type="journal article" date="2002" name="Nature">
        <title>The genome sequence of Schizosaccharomyces pombe.</title>
        <authorList>
            <person name="Wood V."/>
            <person name="Gwilliam R."/>
            <person name="Rajandream M.A."/>
            <person name="Lyne M.H."/>
            <person name="Lyne R."/>
            <person name="Stewart A."/>
            <person name="Sgouros J.G."/>
            <person name="Peat N."/>
            <person name="Hayles J."/>
            <person name="Baker S.G."/>
            <person name="Basham D."/>
            <person name="Bowman S."/>
            <person name="Brooks K."/>
            <person name="Brown D."/>
            <person name="Brown S."/>
            <person name="Chillingworth T."/>
            <person name="Churcher C.M."/>
            <person name="Collins M."/>
            <person name="Connor R."/>
            <person name="Cronin A."/>
            <person name="Davis P."/>
            <person name="Feltwell T."/>
            <person name="Fraser A."/>
            <person name="Gentles S."/>
            <person name="Goble A."/>
            <person name="Hamlin N."/>
            <person name="Harris D.E."/>
            <person name="Hidalgo J."/>
            <person name="Hodgson G."/>
            <person name="Holroyd S."/>
            <person name="Hornsby T."/>
            <person name="Howarth S."/>
            <person name="Huckle E.J."/>
            <person name="Hunt S."/>
            <person name="Jagels K."/>
            <person name="James K.D."/>
            <person name="Jones L."/>
            <person name="Jones M."/>
            <person name="Leather S."/>
            <person name="McDonald S."/>
            <person name="McLean J."/>
            <person name="Mooney P."/>
            <person name="Moule S."/>
            <person name="Mungall K.L."/>
            <person name="Murphy L.D."/>
            <person name="Niblett D."/>
            <person name="Odell C."/>
            <person name="Oliver K."/>
            <person name="O'Neil S."/>
            <person name="Pearson D."/>
            <person name="Quail M.A."/>
            <person name="Rabbinowitsch E."/>
            <person name="Rutherford K.M."/>
            <person name="Rutter S."/>
            <person name="Saunders D."/>
            <person name="Seeger K."/>
            <person name="Sharp S."/>
            <person name="Skelton J."/>
            <person name="Simmonds M.N."/>
            <person name="Squares R."/>
            <person name="Squares S."/>
            <person name="Stevens K."/>
            <person name="Taylor K."/>
            <person name="Taylor R.G."/>
            <person name="Tivey A."/>
            <person name="Walsh S.V."/>
            <person name="Warren T."/>
            <person name="Whitehead S."/>
            <person name="Woodward J.R."/>
            <person name="Volckaert G."/>
            <person name="Aert R."/>
            <person name="Robben J."/>
            <person name="Grymonprez B."/>
            <person name="Weltjens I."/>
            <person name="Vanstreels E."/>
            <person name="Rieger M."/>
            <person name="Schaefer M."/>
            <person name="Mueller-Auer S."/>
            <person name="Gabel C."/>
            <person name="Fuchs M."/>
            <person name="Duesterhoeft A."/>
            <person name="Fritzc C."/>
            <person name="Holzer E."/>
            <person name="Moestl D."/>
            <person name="Hilbert H."/>
            <person name="Borzym K."/>
            <person name="Langer I."/>
            <person name="Beck A."/>
            <person name="Lehrach H."/>
            <person name="Reinhardt R."/>
            <person name="Pohl T.M."/>
            <person name="Eger P."/>
            <person name="Zimmermann W."/>
            <person name="Wedler H."/>
            <person name="Wambutt R."/>
            <person name="Purnelle B."/>
            <person name="Goffeau A."/>
            <person name="Cadieu E."/>
            <person name="Dreano S."/>
            <person name="Gloux S."/>
            <person name="Lelaure V."/>
            <person name="Mottier S."/>
            <person name="Galibert F."/>
            <person name="Aves S.J."/>
            <person name="Xiang Z."/>
            <person name="Hunt C."/>
            <person name="Moore K."/>
            <person name="Hurst S.M."/>
            <person name="Lucas M."/>
            <person name="Rochet M."/>
            <person name="Gaillardin C."/>
            <person name="Tallada V.A."/>
            <person name="Garzon A."/>
            <person name="Thode G."/>
            <person name="Daga R.R."/>
            <person name="Cruzado L."/>
            <person name="Jimenez J."/>
            <person name="Sanchez M."/>
            <person name="del Rey F."/>
            <person name="Benito J."/>
            <person name="Dominguez A."/>
            <person name="Revuelta J.L."/>
            <person name="Moreno S."/>
            <person name="Armstrong J."/>
            <person name="Forsburg S.L."/>
            <person name="Cerutti L."/>
            <person name="Lowe T."/>
            <person name="McCombie W.R."/>
            <person name="Paulsen I."/>
            <person name="Potashkin J."/>
            <person name="Shpakovski G.V."/>
            <person name="Ussery D."/>
            <person name="Barrell B.G."/>
            <person name="Nurse P."/>
        </authorList>
    </citation>
    <scope>NUCLEOTIDE SEQUENCE [LARGE SCALE GENOMIC DNA]</scope>
    <source>
        <strain>972 / ATCC 24843</strain>
    </source>
</reference>
<reference key="2">
    <citation type="journal article" date="2005" name="Curr. Biol.">
        <title>A large-scale screen in S. pombe identifies seven novel genes required for critical meiotic events.</title>
        <authorList>
            <person name="Martin-Castellanos C."/>
            <person name="Blanco M."/>
            <person name="Rozalen A.E."/>
            <person name="Perez-Hidalgo L."/>
            <person name="Garcia A.I."/>
            <person name="Conde F."/>
            <person name="Mata J."/>
            <person name="Ellermeier C."/>
            <person name="Davis L."/>
            <person name="San-Segundo P."/>
            <person name="Smith G.R."/>
            <person name="Moreno S."/>
        </authorList>
    </citation>
    <scope>FUNCTION IN MEIOSIS</scope>
</reference>
<reference key="3">
    <citation type="journal article" date="2006" name="Nat. Biotechnol.">
        <title>ORFeome cloning and global analysis of protein localization in the fission yeast Schizosaccharomyces pombe.</title>
        <authorList>
            <person name="Matsuyama A."/>
            <person name="Arai R."/>
            <person name="Yashiroda Y."/>
            <person name="Shirai A."/>
            <person name="Kamata A."/>
            <person name="Sekido S."/>
            <person name="Kobayashi Y."/>
            <person name="Hashimoto A."/>
            <person name="Hamamoto M."/>
            <person name="Hiraoka Y."/>
            <person name="Horinouchi S."/>
            <person name="Yoshida M."/>
        </authorList>
    </citation>
    <scope>SUBCELLULAR LOCATION [LARGE SCALE ANALYSIS]</scope>
</reference>
<proteinExistence type="evidence at protein level"/>
<keyword id="KW-0159">Chromosome partition</keyword>
<keyword id="KW-0469">Meiosis</keyword>
<keyword id="KW-0539">Nucleus</keyword>
<keyword id="KW-1185">Reference proteome</keyword>
<feature type="chain" id="PRO_0000297690" description="Twin horsetail protein 2">
    <location>
        <begin position="1"/>
        <end position="201"/>
    </location>
</feature>
<dbReference type="EMBL" id="CU329670">
    <property type="protein sequence ID" value="CAB16878.1"/>
    <property type="molecule type" value="Genomic_DNA"/>
</dbReference>
<dbReference type="PIR" id="T38262">
    <property type="entry name" value="T38262"/>
</dbReference>
<dbReference type="RefSeq" id="NP_593179.1">
    <property type="nucleotide sequence ID" value="NM_001018575.2"/>
</dbReference>
<dbReference type="SMR" id="O13927"/>
<dbReference type="BioGRID" id="278426">
    <property type="interactions" value="2"/>
</dbReference>
<dbReference type="STRING" id="284812.O13927"/>
<dbReference type="PaxDb" id="4896-SPAC23C4.07.1"/>
<dbReference type="EnsemblFungi" id="SPAC23C4.07.1">
    <property type="protein sequence ID" value="SPAC23C4.07.1:pep"/>
    <property type="gene ID" value="SPAC23C4.07"/>
</dbReference>
<dbReference type="GeneID" id="2541939"/>
<dbReference type="KEGG" id="spo:2541939"/>
<dbReference type="PomBase" id="SPAC23C4.07">
    <property type="gene designation" value="tht2"/>
</dbReference>
<dbReference type="VEuPathDB" id="FungiDB:SPAC23C4.07"/>
<dbReference type="HOGENOM" id="CLU_1422176_0_0_1"/>
<dbReference type="InParanoid" id="O13927"/>
<dbReference type="OMA" id="EWIIMIQ"/>
<dbReference type="PRO" id="PR:O13927"/>
<dbReference type="Proteomes" id="UP000002485">
    <property type="component" value="Chromosome I"/>
</dbReference>
<dbReference type="GO" id="GO:0005634">
    <property type="term" value="C:nucleus"/>
    <property type="evidence" value="ECO:0007005"/>
    <property type="project" value="PomBase"/>
</dbReference>
<dbReference type="GO" id="GO:0007059">
    <property type="term" value="P:chromosome segregation"/>
    <property type="evidence" value="ECO:0007669"/>
    <property type="project" value="UniProtKB-KW"/>
</dbReference>
<dbReference type="GO" id="GO:0000742">
    <property type="term" value="P:karyogamy involved in conjugation with cellular fusion"/>
    <property type="evidence" value="ECO:0000315"/>
    <property type="project" value="PomBase"/>
</dbReference>
<dbReference type="GO" id="GO:0051321">
    <property type="term" value="P:meiotic cell cycle"/>
    <property type="evidence" value="ECO:0007669"/>
    <property type="project" value="UniProtKB-KW"/>
</dbReference>
<gene>
    <name type="primary">tht2</name>
    <name type="synonym">mug22</name>
    <name type="ORF">SPAC23C4.07</name>
</gene>
<accession>O13927</accession>
<protein>
    <recommendedName>
        <fullName>Twin horsetail protein 2</fullName>
    </recommendedName>
    <alternativeName>
        <fullName>Meiotically up-regulated gene 22 protein</fullName>
    </alternativeName>
</protein>
<sequence>MENQVSSFLIDSPMEWKTYMKSLSDDNPSFGDVTVNLTKISVSSKNAKSYAEEMYNYVTQEMVFISERSRLLLRAKRRLYKNQSLMKKTSVSTSNTVKMVFMSLAKQIEQMLKFCMMVYSKLCEAFETTLKVAKEFQICDSSQEWFFQFQLGYHRKQMELQMLSFVAEWLVLTQHYTDALNDSAKTLYDIMESSHKAAQKV</sequence>